<comment type="function">
    <text evidence="1">Catalyzes the conversion of (8S)-3',8-cyclo-7,8-dihydroguanosine 5'-triphosphate to cyclic pyranopterin monophosphate (cPMP).</text>
</comment>
<comment type="catalytic activity">
    <reaction evidence="1">
        <text>(8S)-3',8-cyclo-7,8-dihydroguanosine 5'-triphosphate = cyclic pyranopterin phosphate + diphosphate</text>
        <dbReference type="Rhea" id="RHEA:49580"/>
        <dbReference type="ChEBI" id="CHEBI:33019"/>
        <dbReference type="ChEBI" id="CHEBI:59648"/>
        <dbReference type="ChEBI" id="CHEBI:131766"/>
        <dbReference type="EC" id="4.6.1.17"/>
    </reaction>
</comment>
<comment type="pathway">
    <text evidence="1">Cofactor biosynthesis; molybdopterin biosynthesis.</text>
</comment>
<comment type="subunit">
    <text evidence="1">Homohexamer; trimer of dimers.</text>
</comment>
<comment type="similarity">
    <text evidence="1">Belongs to the MoaC family.</text>
</comment>
<sequence>MSQLTHINAAGEAHMVDVSAKAETVREARAEAFVTMRSETLAMIIDGSHHKGDVFATARIAGIQAAKRTWELIPLCHPLLLSKVEVQLQAEPEHNRVRIESLCRLTGKTGVEMEALTAASVAALTIYDMCKAVQKDMVIGPVRLLAKSGGKSGDFKVDAHD</sequence>
<evidence type="ECO:0000255" key="1">
    <source>
        <dbReference type="HAMAP-Rule" id="MF_01224"/>
    </source>
</evidence>
<dbReference type="EC" id="4.6.1.17" evidence="1"/>
<dbReference type="EMBL" id="CP000822">
    <property type="protein sequence ID" value="ABV13465.1"/>
    <property type="molecule type" value="Genomic_DNA"/>
</dbReference>
<dbReference type="RefSeq" id="WP_012133192.1">
    <property type="nucleotide sequence ID" value="NC_009792.1"/>
</dbReference>
<dbReference type="SMR" id="A8AJ02"/>
<dbReference type="STRING" id="290338.CKO_02343"/>
<dbReference type="GeneID" id="45136248"/>
<dbReference type="KEGG" id="cko:CKO_02343"/>
<dbReference type="HOGENOM" id="CLU_074693_1_1_6"/>
<dbReference type="OrthoDB" id="9794429at2"/>
<dbReference type="UniPathway" id="UPA00344"/>
<dbReference type="Proteomes" id="UP000008148">
    <property type="component" value="Chromosome"/>
</dbReference>
<dbReference type="GO" id="GO:0061799">
    <property type="term" value="F:cyclic pyranopterin monophosphate synthase activity"/>
    <property type="evidence" value="ECO:0007669"/>
    <property type="project" value="UniProtKB-UniRule"/>
</dbReference>
<dbReference type="GO" id="GO:0006777">
    <property type="term" value="P:Mo-molybdopterin cofactor biosynthetic process"/>
    <property type="evidence" value="ECO:0007669"/>
    <property type="project" value="UniProtKB-UniRule"/>
</dbReference>
<dbReference type="CDD" id="cd01420">
    <property type="entry name" value="MoaC_PE"/>
    <property type="match status" value="1"/>
</dbReference>
<dbReference type="FunFam" id="3.30.70.640:FF:000001">
    <property type="entry name" value="Cyclic pyranopterin monophosphate synthase"/>
    <property type="match status" value="1"/>
</dbReference>
<dbReference type="Gene3D" id="3.30.70.640">
    <property type="entry name" value="Molybdopterin cofactor biosynthesis C (MoaC) domain"/>
    <property type="match status" value="1"/>
</dbReference>
<dbReference type="HAMAP" id="MF_01224_B">
    <property type="entry name" value="MoaC_B"/>
    <property type="match status" value="1"/>
</dbReference>
<dbReference type="InterPro" id="IPR023045">
    <property type="entry name" value="MoaC"/>
</dbReference>
<dbReference type="InterPro" id="IPR047594">
    <property type="entry name" value="MoaC_bact/euk"/>
</dbReference>
<dbReference type="InterPro" id="IPR036522">
    <property type="entry name" value="MoaC_sf"/>
</dbReference>
<dbReference type="InterPro" id="IPR050105">
    <property type="entry name" value="MoCo_biosynth_MoaA/MoaC"/>
</dbReference>
<dbReference type="InterPro" id="IPR002820">
    <property type="entry name" value="Mopterin_CF_biosynth-C_dom"/>
</dbReference>
<dbReference type="NCBIfam" id="TIGR00581">
    <property type="entry name" value="moaC"/>
    <property type="match status" value="1"/>
</dbReference>
<dbReference type="NCBIfam" id="NF006870">
    <property type="entry name" value="PRK09364.1"/>
    <property type="match status" value="1"/>
</dbReference>
<dbReference type="PANTHER" id="PTHR22960">
    <property type="entry name" value="MOLYBDOPTERIN COFACTOR SYNTHESIS PROTEIN A"/>
    <property type="match status" value="1"/>
</dbReference>
<dbReference type="Pfam" id="PF01967">
    <property type="entry name" value="MoaC"/>
    <property type="match status" value="1"/>
</dbReference>
<dbReference type="SUPFAM" id="SSF55040">
    <property type="entry name" value="Molybdenum cofactor biosynthesis protein C, MoaC"/>
    <property type="match status" value="1"/>
</dbReference>
<accession>A8AJ02</accession>
<organism>
    <name type="scientific">Citrobacter koseri (strain ATCC BAA-895 / CDC 4225-83 / SGSC4696)</name>
    <dbReference type="NCBI Taxonomy" id="290338"/>
    <lineage>
        <taxon>Bacteria</taxon>
        <taxon>Pseudomonadati</taxon>
        <taxon>Pseudomonadota</taxon>
        <taxon>Gammaproteobacteria</taxon>
        <taxon>Enterobacterales</taxon>
        <taxon>Enterobacteriaceae</taxon>
        <taxon>Citrobacter</taxon>
    </lineage>
</organism>
<keyword id="KW-0456">Lyase</keyword>
<keyword id="KW-0501">Molybdenum cofactor biosynthesis</keyword>
<keyword id="KW-1185">Reference proteome</keyword>
<feature type="chain" id="PRO_1000054086" description="Cyclic pyranopterin monophosphate synthase">
    <location>
        <begin position="1"/>
        <end position="161"/>
    </location>
</feature>
<feature type="active site" evidence="1">
    <location>
        <position position="128"/>
    </location>
</feature>
<feature type="binding site" evidence="1">
    <location>
        <begin position="75"/>
        <end position="77"/>
    </location>
    <ligand>
        <name>substrate</name>
    </ligand>
</feature>
<feature type="binding site" evidence="1">
    <location>
        <begin position="113"/>
        <end position="114"/>
    </location>
    <ligand>
        <name>substrate</name>
    </ligand>
</feature>
<proteinExistence type="inferred from homology"/>
<protein>
    <recommendedName>
        <fullName evidence="1">Cyclic pyranopterin monophosphate synthase</fullName>
        <ecNumber evidence="1">4.6.1.17</ecNumber>
    </recommendedName>
    <alternativeName>
        <fullName evidence="1">Molybdenum cofactor biosynthesis protein C</fullName>
    </alternativeName>
</protein>
<name>MOAC_CITK8</name>
<gene>
    <name evidence="1" type="primary">moaC</name>
    <name type="ordered locus">CKO_02343</name>
</gene>
<reference key="1">
    <citation type="submission" date="2007-08" db="EMBL/GenBank/DDBJ databases">
        <authorList>
            <consortium name="The Citrobacter koseri Genome Sequencing Project"/>
            <person name="McClelland M."/>
            <person name="Sanderson E.K."/>
            <person name="Porwollik S."/>
            <person name="Spieth J."/>
            <person name="Clifton W.S."/>
            <person name="Latreille P."/>
            <person name="Courtney L."/>
            <person name="Wang C."/>
            <person name="Pepin K."/>
            <person name="Bhonagiri V."/>
            <person name="Nash W."/>
            <person name="Johnson M."/>
            <person name="Thiruvilangam P."/>
            <person name="Wilson R."/>
        </authorList>
    </citation>
    <scope>NUCLEOTIDE SEQUENCE [LARGE SCALE GENOMIC DNA]</scope>
    <source>
        <strain>ATCC BAA-895 / CDC 4225-83 / SGSC4696</strain>
    </source>
</reference>